<gene>
    <name evidence="1" type="primary">rplU</name>
    <name type="ordered locus">BMEI0201</name>
</gene>
<dbReference type="EMBL" id="AE008917">
    <property type="protein sequence ID" value="AAL51383.1"/>
    <property type="status" value="ALT_INIT"/>
    <property type="molecule type" value="Genomic_DNA"/>
</dbReference>
<dbReference type="PIR" id="AD3277">
    <property type="entry name" value="AD3277"/>
</dbReference>
<dbReference type="RefSeq" id="WP_002967949.1">
    <property type="nucleotide sequence ID" value="NZ_GG703781.1"/>
</dbReference>
<dbReference type="SMR" id="Q8YJ85"/>
<dbReference type="GeneID" id="97533030"/>
<dbReference type="KEGG" id="bme:BMEI0201"/>
<dbReference type="KEGG" id="bmel:DK63_1229"/>
<dbReference type="PATRIC" id="fig|224914.52.peg.1302"/>
<dbReference type="eggNOG" id="COG0261">
    <property type="taxonomic scope" value="Bacteria"/>
</dbReference>
<dbReference type="PhylomeDB" id="Q8YJ85"/>
<dbReference type="Proteomes" id="UP000000419">
    <property type="component" value="Chromosome I"/>
</dbReference>
<dbReference type="GO" id="GO:0005737">
    <property type="term" value="C:cytoplasm"/>
    <property type="evidence" value="ECO:0007669"/>
    <property type="project" value="UniProtKB-ARBA"/>
</dbReference>
<dbReference type="GO" id="GO:1990904">
    <property type="term" value="C:ribonucleoprotein complex"/>
    <property type="evidence" value="ECO:0007669"/>
    <property type="project" value="UniProtKB-KW"/>
</dbReference>
<dbReference type="GO" id="GO:0005840">
    <property type="term" value="C:ribosome"/>
    <property type="evidence" value="ECO:0007669"/>
    <property type="project" value="UniProtKB-KW"/>
</dbReference>
<dbReference type="GO" id="GO:0019843">
    <property type="term" value="F:rRNA binding"/>
    <property type="evidence" value="ECO:0007669"/>
    <property type="project" value="UniProtKB-UniRule"/>
</dbReference>
<dbReference type="GO" id="GO:0003735">
    <property type="term" value="F:structural constituent of ribosome"/>
    <property type="evidence" value="ECO:0007669"/>
    <property type="project" value="InterPro"/>
</dbReference>
<dbReference type="GO" id="GO:0006412">
    <property type="term" value="P:translation"/>
    <property type="evidence" value="ECO:0007669"/>
    <property type="project" value="UniProtKB-UniRule"/>
</dbReference>
<dbReference type="HAMAP" id="MF_01363">
    <property type="entry name" value="Ribosomal_bL21"/>
    <property type="match status" value="1"/>
</dbReference>
<dbReference type="InterPro" id="IPR028909">
    <property type="entry name" value="bL21-like"/>
</dbReference>
<dbReference type="InterPro" id="IPR036164">
    <property type="entry name" value="bL21-like_sf"/>
</dbReference>
<dbReference type="InterPro" id="IPR001787">
    <property type="entry name" value="Ribosomal_bL21"/>
</dbReference>
<dbReference type="NCBIfam" id="TIGR00061">
    <property type="entry name" value="L21"/>
    <property type="match status" value="1"/>
</dbReference>
<dbReference type="PANTHER" id="PTHR21349">
    <property type="entry name" value="50S RIBOSOMAL PROTEIN L21"/>
    <property type="match status" value="1"/>
</dbReference>
<dbReference type="PANTHER" id="PTHR21349:SF0">
    <property type="entry name" value="LARGE RIBOSOMAL SUBUNIT PROTEIN BL21M"/>
    <property type="match status" value="1"/>
</dbReference>
<dbReference type="Pfam" id="PF00829">
    <property type="entry name" value="Ribosomal_L21p"/>
    <property type="match status" value="1"/>
</dbReference>
<dbReference type="SUPFAM" id="SSF141091">
    <property type="entry name" value="L21p-like"/>
    <property type="match status" value="1"/>
</dbReference>
<keyword id="KW-0687">Ribonucleoprotein</keyword>
<keyword id="KW-0689">Ribosomal protein</keyword>
<keyword id="KW-0694">RNA-binding</keyword>
<keyword id="KW-0699">rRNA-binding</keyword>
<organism>
    <name type="scientific">Brucella melitensis biotype 1 (strain ATCC 23456 / CCUG 17765 / NCTC 10094 / 16M)</name>
    <dbReference type="NCBI Taxonomy" id="224914"/>
    <lineage>
        <taxon>Bacteria</taxon>
        <taxon>Pseudomonadati</taxon>
        <taxon>Pseudomonadota</taxon>
        <taxon>Alphaproteobacteria</taxon>
        <taxon>Hyphomicrobiales</taxon>
        <taxon>Brucellaceae</taxon>
        <taxon>Brucella/Ochrobactrum group</taxon>
        <taxon>Brucella</taxon>
    </lineage>
</organism>
<accession>Q8YJ85</accession>
<sequence length="142" mass="15021">MFAVIKTGGKQYRVAANDLIKVEKVAGEAGDIVEFAEVLMVGSTIGAPTVAGALVTAEVVEQGRGRKVIAFKKRRRQNSKRTRGHRQELTTIRISEILTDGAKPSKKAAEKKAPKADAAEGEAAKPKKAAPKKAAAKAESAE</sequence>
<proteinExistence type="inferred from homology"/>
<evidence type="ECO:0000255" key="1">
    <source>
        <dbReference type="HAMAP-Rule" id="MF_01363"/>
    </source>
</evidence>
<evidence type="ECO:0000256" key="2">
    <source>
        <dbReference type="SAM" id="MobiDB-lite"/>
    </source>
</evidence>
<evidence type="ECO:0000305" key="3"/>
<reference key="1">
    <citation type="journal article" date="2002" name="Proc. Natl. Acad. Sci. U.S.A.">
        <title>The genome sequence of the facultative intracellular pathogen Brucella melitensis.</title>
        <authorList>
            <person name="DelVecchio V.G."/>
            <person name="Kapatral V."/>
            <person name="Redkar R.J."/>
            <person name="Patra G."/>
            <person name="Mujer C."/>
            <person name="Los T."/>
            <person name="Ivanova N."/>
            <person name="Anderson I."/>
            <person name="Bhattacharyya A."/>
            <person name="Lykidis A."/>
            <person name="Reznik G."/>
            <person name="Jablonski L."/>
            <person name="Larsen N."/>
            <person name="D'Souza M."/>
            <person name="Bernal A."/>
            <person name="Mazur M."/>
            <person name="Goltsman E."/>
            <person name="Selkov E."/>
            <person name="Elzer P.H."/>
            <person name="Hagius S."/>
            <person name="O'Callaghan D."/>
            <person name="Letesson J.-J."/>
            <person name="Haselkorn R."/>
            <person name="Kyrpides N.C."/>
            <person name="Overbeek R."/>
        </authorList>
    </citation>
    <scope>NUCLEOTIDE SEQUENCE [LARGE SCALE GENOMIC DNA]</scope>
    <source>
        <strain>ATCC 23456 / CCUG 17765 / NCTC 10094 / 16M</strain>
    </source>
</reference>
<protein>
    <recommendedName>
        <fullName evidence="1">Large ribosomal subunit protein bL21</fullName>
    </recommendedName>
    <alternativeName>
        <fullName evidence="3">50S ribosomal protein L21</fullName>
    </alternativeName>
</protein>
<name>RL21_BRUME</name>
<feature type="chain" id="PRO_0000269291" description="Large ribosomal subunit protein bL21">
    <location>
        <begin position="1"/>
        <end position="142"/>
    </location>
</feature>
<feature type="region of interest" description="Disordered" evidence="2">
    <location>
        <begin position="74"/>
        <end position="142"/>
    </location>
</feature>
<feature type="compositionally biased region" description="Basic residues" evidence="2">
    <location>
        <begin position="74"/>
        <end position="84"/>
    </location>
</feature>
<feature type="compositionally biased region" description="Basic and acidic residues" evidence="2">
    <location>
        <begin position="107"/>
        <end position="125"/>
    </location>
</feature>
<feature type="compositionally biased region" description="Basic residues" evidence="2">
    <location>
        <begin position="126"/>
        <end position="135"/>
    </location>
</feature>
<comment type="function">
    <text evidence="1">This protein binds to 23S rRNA in the presence of protein L20.</text>
</comment>
<comment type="subunit">
    <text evidence="1">Part of the 50S ribosomal subunit. Contacts protein L20.</text>
</comment>
<comment type="similarity">
    <text evidence="1">Belongs to the bacterial ribosomal protein bL21 family.</text>
</comment>
<comment type="sequence caution" evidence="3">
    <conflict type="erroneous initiation">
        <sequence resource="EMBL-CDS" id="AAL51383"/>
    </conflict>
</comment>